<feature type="chain" id="PRO_1000202001" description="Holliday junction branch migration complex subunit RuvA">
    <location>
        <begin position="1"/>
        <end position="203"/>
    </location>
</feature>
<feature type="region of interest" description="Domain I" evidence="1">
    <location>
        <begin position="1"/>
        <end position="63"/>
    </location>
</feature>
<feature type="region of interest" description="Domain II" evidence="1">
    <location>
        <begin position="64"/>
        <end position="142"/>
    </location>
</feature>
<feature type="region of interest" description="Flexible linker" evidence="1">
    <location>
        <begin position="143"/>
        <end position="149"/>
    </location>
</feature>
<feature type="region of interest" description="Domain III" evidence="1">
    <location>
        <begin position="150"/>
        <end position="203"/>
    </location>
</feature>
<keyword id="KW-0963">Cytoplasm</keyword>
<keyword id="KW-0227">DNA damage</keyword>
<keyword id="KW-0233">DNA recombination</keyword>
<keyword id="KW-0234">DNA repair</keyword>
<keyword id="KW-0238">DNA-binding</keyword>
<organism>
    <name type="scientific">Rickettsia africae (strain ESF-5)</name>
    <dbReference type="NCBI Taxonomy" id="347255"/>
    <lineage>
        <taxon>Bacteria</taxon>
        <taxon>Pseudomonadati</taxon>
        <taxon>Pseudomonadota</taxon>
        <taxon>Alphaproteobacteria</taxon>
        <taxon>Rickettsiales</taxon>
        <taxon>Rickettsiaceae</taxon>
        <taxon>Rickettsieae</taxon>
        <taxon>Rickettsia</taxon>
        <taxon>spotted fever group</taxon>
    </lineage>
</organism>
<name>RUVA_RICAE</name>
<gene>
    <name evidence="1" type="primary">ruvA</name>
    <name type="ordered locus">RAF_ORF0493</name>
</gene>
<dbReference type="EMBL" id="CP001612">
    <property type="protein sequence ID" value="ACP53414.1"/>
    <property type="molecule type" value="Genomic_DNA"/>
</dbReference>
<dbReference type="RefSeq" id="WP_012719641.1">
    <property type="nucleotide sequence ID" value="NC_012633.1"/>
</dbReference>
<dbReference type="SMR" id="C3PNA4"/>
<dbReference type="KEGG" id="raf:RAF_ORF0493"/>
<dbReference type="HOGENOM" id="CLU_087936_3_0_5"/>
<dbReference type="Proteomes" id="UP000002305">
    <property type="component" value="Chromosome"/>
</dbReference>
<dbReference type="GO" id="GO:0005737">
    <property type="term" value="C:cytoplasm"/>
    <property type="evidence" value="ECO:0007669"/>
    <property type="project" value="UniProtKB-SubCell"/>
</dbReference>
<dbReference type="GO" id="GO:0009379">
    <property type="term" value="C:Holliday junction helicase complex"/>
    <property type="evidence" value="ECO:0007669"/>
    <property type="project" value="InterPro"/>
</dbReference>
<dbReference type="GO" id="GO:0048476">
    <property type="term" value="C:Holliday junction resolvase complex"/>
    <property type="evidence" value="ECO:0007669"/>
    <property type="project" value="UniProtKB-UniRule"/>
</dbReference>
<dbReference type="GO" id="GO:0005524">
    <property type="term" value="F:ATP binding"/>
    <property type="evidence" value="ECO:0007669"/>
    <property type="project" value="InterPro"/>
</dbReference>
<dbReference type="GO" id="GO:0000400">
    <property type="term" value="F:four-way junction DNA binding"/>
    <property type="evidence" value="ECO:0007669"/>
    <property type="project" value="UniProtKB-UniRule"/>
</dbReference>
<dbReference type="GO" id="GO:0009378">
    <property type="term" value="F:four-way junction helicase activity"/>
    <property type="evidence" value="ECO:0007669"/>
    <property type="project" value="InterPro"/>
</dbReference>
<dbReference type="GO" id="GO:0006310">
    <property type="term" value="P:DNA recombination"/>
    <property type="evidence" value="ECO:0007669"/>
    <property type="project" value="UniProtKB-UniRule"/>
</dbReference>
<dbReference type="GO" id="GO:0006281">
    <property type="term" value="P:DNA repair"/>
    <property type="evidence" value="ECO:0007669"/>
    <property type="project" value="UniProtKB-UniRule"/>
</dbReference>
<dbReference type="CDD" id="cd14332">
    <property type="entry name" value="UBA_RuvA_C"/>
    <property type="match status" value="1"/>
</dbReference>
<dbReference type="Gene3D" id="1.10.150.20">
    <property type="entry name" value="5' to 3' exonuclease, C-terminal subdomain"/>
    <property type="match status" value="1"/>
</dbReference>
<dbReference type="Gene3D" id="1.10.8.10">
    <property type="entry name" value="DNA helicase RuvA subunit, C-terminal domain"/>
    <property type="match status" value="1"/>
</dbReference>
<dbReference type="Gene3D" id="2.40.50.140">
    <property type="entry name" value="Nucleic acid-binding proteins"/>
    <property type="match status" value="1"/>
</dbReference>
<dbReference type="HAMAP" id="MF_00031">
    <property type="entry name" value="DNA_HJ_migration_RuvA"/>
    <property type="match status" value="1"/>
</dbReference>
<dbReference type="InterPro" id="IPR013849">
    <property type="entry name" value="DNA_helicase_Holl-junc_RuvA_I"/>
</dbReference>
<dbReference type="InterPro" id="IPR012340">
    <property type="entry name" value="NA-bd_OB-fold"/>
</dbReference>
<dbReference type="InterPro" id="IPR000085">
    <property type="entry name" value="RuvA"/>
</dbReference>
<dbReference type="InterPro" id="IPR010994">
    <property type="entry name" value="RuvA_2-like"/>
</dbReference>
<dbReference type="InterPro" id="IPR011114">
    <property type="entry name" value="RuvA_C"/>
</dbReference>
<dbReference type="InterPro" id="IPR036267">
    <property type="entry name" value="RuvA_C_sf"/>
</dbReference>
<dbReference type="NCBIfam" id="TIGR00084">
    <property type="entry name" value="ruvA"/>
    <property type="match status" value="1"/>
</dbReference>
<dbReference type="Pfam" id="PF14520">
    <property type="entry name" value="HHH_5"/>
    <property type="match status" value="1"/>
</dbReference>
<dbReference type="Pfam" id="PF07499">
    <property type="entry name" value="RuvA_C"/>
    <property type="match status" value="1"/>
</dbReference>
<dbReference type="Pfam" id="PF01330">
    <property type="entry name" value="RuvA_N"/>
    <property type="match status" value="1"/>
</dbReference>
<dbReference type="SUPFAM" id="SSF46929">
    <property type="entry name" value="DNA helicase RuvA subunit, C-terminal domain"/>
    <property type="match status" value="1"/>
</dbReference>
<dbReference type="SUPFAM" id="SSF50249">
    <property type="entry name" value="Nucleic acid-binding proteins"/>
    <property type="match status" value="1"/>
</dbReference>
<dbReference type="SUPFAM" id="SSF47781">
    <property type="entry name" value="RuvA domain 2-like"/>
    <property type="match status" value="1"/>
</dbReference>
<evidence type="ECO:0000255" key="1">
    <source>
        <dbReference type="HAMAP-Rule" id="MF_00031"/>
    </source>
</evidence>
<proteinExistence type="inferred from homology"/>
<sequence>MIGQLSGKVDAQGDDYVIIDVNGVGYLVYASGKTLGKLAEGEFYKLFIETHVREEHIHLYGFLNLEEKIFFNLLQSVNGIGTRMALFILSSLTPSDIQIAVNNEDKNIFKAISGVGAKLAERIVLELKGKVAKISSGSAIIKESLNIKHITPVASNEVIKALVNLGFSRFEAQNAVQGIITQNPEISIDELIKTALKNRNSNF</sequence>
<protein>
    <recommendedName>
        <fullName evidence="1">Holliday junction branch migration complex subunit RuvA</fullName>
    </recommendedName>
</protein>
<comment type="function">
    <text evidence="1">The RuvA-RuvB-RuvC complex processes Holliday junction (HJ) DNA during genetic recombination and DNA repair, while the RuvA-RuvB complex plays an important role in the rescue of blocked DNA replication forks via replication fork reversal (RFR). RuvA specifically binds to HJ cruciform DNA, conferring on it an open structure. The RuvB hexamer acts as an ATP-dependent pump, pulling dsDNA into and through the RuvAB complex. HJ branch migration allows RuvC to scan DNA until it finds its consensus sequence, where it cleaves and resolves the cruciform DNA.</text>
</comment>
<comment type="subunit">
    <text evidence="1">Homotetramer. Forms an RuvA(8)-RuvB(12)-Holliday junction (HJ) complex. HJ DNA is sandwiched between 2 RuvA tetramers; dsDNA enters through RuvA and exits via RuvB. An RuvB hexamer assembles on each DNA strand where it exits the tetramer. Each RuvB hexamer is contacted by two RuvA subunits (via domain III) on 2 adjacent RuvB subunits; this complex drives branch migration. In the full resolvosome a probable DNA-RuvA(4)-RuvB(12)-RuvC(2) complex forms which resolves the HJ.</text>
</comment>
<comment type="subcellular location">
    <subcellularLocation>
        <location evidence="1">Cytoplasm</location>
    </subcellularLocation>
</comment>
<comment type="domain">
    <text evidence="1">Has three domains with a flexible linker between the domains II and III and assumes an 'L' shape. Domain III is highly mobile and contacts RuvB.</text>
</comment>
<comment type="similarity">
    <text evidence="1">Belongs to the RuvA family.</text>
</comment>
<reference key="1">
    <citation type="journal article" date="2009" name="BMC Genomics">
        <title>Analysis of the Rickettsia africae genome reveals that virulence acquisition in Rickettsia species may be explained by genome reduction.</title>
        <authorList>
            <person name="Fournier P.-E."/>
            <person name="El Karkouri K."/>
            <person name="Leroy Q."/>
            <person name="Robert C."/>
            <person name="Giumelli B."/>
            <person name="Renesto P."/>
            <person name="Socolovschi C."/>
            <person name="Parola P."/>
            <person name="Audic S."/>
            <person name="Raoult D."/>
        </authorList>
    </citation>
    <scope>NUCLEOTIDE SEQUENCE [LARGE SCALE GENOMIC DNA]</scope>
    <source>
        <strain>ESF-5</strain>
    </source>
</reference>
<accession>C3PNA4</accession>